<gene>
    <name evidence="1" type="primary">KATNA1</name>
</gene>
<accession>O61577</accession>
<sequence length="516" mass="57593">MSVDEICENTKMGREYALLGNYETSLVYYQGVLQQIQKLLTSVHEPQRKHQWQTIRQELSQEYEHVKNITKTLNGFKSEPAAPEPAPNHRAAPFSHHQHAAKPAAAEPARDPDVWPPPTPVDHRPSPPYQRAARKDPPRRSEPSKPANRAPGNDRGGRGPSDRRGDARSGGGGRGGARGSDKDKNRGGKSDKDKKAPSGEEGDEKKFDPAGYDKDLVENLERDIVQRNPNVHWADIAGLTEAKRLLEEAVVLPLWMPDYFKGIRRPWKGVLMVGPPGTGKTMLAKAVATECGTTFFNVSSASLTSKYHGESEKLVRLLFEMARFYAPSTIFIDEIDSICSKRGTGSEHEASRRVKSELLIQMDGVSGPSAGEESSKMVMVLAATNFPWDIDEALRRRLEKRIYIPLPEIDGREQLLRINLKEVPLADDIDLKSIAEKMDGYSGADITNVCRDASMMAMRRRIQGLRPEEIRHIPKEELNQPSTPADFLLALQKVSKSVGKEDLVKYMAWMEEFGSV</sequence>
<comment type="function">
    <text evidence="1 3 4">Catalytic subunit of a complex which severs microtubules in an ATP-dependent manner. Microtubule severing may promote rapid reorganization of cellular microtubule arrays and the release of microtubules from the centrosome following nucleation. In mitotic spindles this could allow depolymerization of the microtubule end proximal to the centrosome, and subsequent poleward microtubule flux.</text>
</comment>
<comment type="catalytic activity">
    <reaction evidence="1">
        <text>n ATP + n H2O + a microtubule = n ADP + n phosphate + (n+1) alpha/beta tubulin heterodimers.</text>
        <dbReference type="EC" id="5.6.1.1"/>
    </reaction>
</comment>
<comment type="activity regulation">
    <text>ATPase activity is stimulated by microtubules, which promote homooligomerization. ATP-dependent microtubule severing is stimulated by interaction with KATNB1.</text>
</comment>
<comment type="subunit">
    <text evidence="1 4">Can homooligomerize into hexameric rings, which may be promoted by interaction with microtubules (By similarity). Interacts with KATNB1, which may serve as a targeting subunit (PubMed:8221885).</text>
</comment>
<comment type="subcellular location">
    <subcellularLocation>
        <location evidence="1">Cytoplasm</location>
    </subcellularLocation>
    <subcellularLocation>
        <location evidence="1 5">Cytoplasm</location>
        <location evidence="1 5">Cytoskeleton</location>
        <location evidence="1 5">Microtubule organizing center</location>
        <location evidence="1 5">Centrosome</location>
    </subcellularLocation>
    <subcellularLocation>
        <location evidence="1 5">Cytoplasm</location>
        <location evidence="1 5">Cytoskeleton</location>
        <location evidence="1 5">Spindle pole</location>
    </subcellularLocation>
    <text evidence="1 5">Predominantly cytoplasmic (By similarity). Also localized to the interphase centrosome and the mitotic spindle poles (PubMed:8907702). Enhanced recruitment to the mitotic spindle poles requires microtubules and interaction with KATNB1 (By similarity).</text>
</comment>
<comment type="similarity">
    <text evidence="1">Belongs to the AAA ATPase family. Katanin p60 subunit A1 subfamily.</text>
</comment>
<reference key="1">
    <citation type="journal article" date="1998" name="Cell">
        <title>Katanin, a microtubule-severing protein, is a novel AAA ATPase that targets to the centrosome using a WD40-containing subunit.</title>
        <authorList>
            <person name="Hartman J.J."/>
            <person name="Mahr J."/>
            <person name="McNally K."/>
            <person name="Okawa K."/>
            <person name="Iwamatsu A."/>
            <person name="Thomas S."/>
            <person name="Cheesman S."/>
            <person name="Heuser J."/>
            <person name="Vale R.D."/>
            <person name="McNally F.J."/>
        </authorList>
    </citation>
    <scope>NUCLEOTIDE SEQUENCE [MRNA]</scope>
    <scope>PROTEIN SEQUENCE OF 77-100; 136-152; 214-261; 355-373; 402-412; 445-458 AND 462-466</scope>
</reference>
<reference key="2">
    <citation type="journal article" date="1993" name="Cell">
        <title>Identification of katanin, an ATPase that severs and disassembles stable microtubules.</title>
        <authorList>
            <person name="McNally F.J."/>
            <person name="Vale R.D."/>
        </authorList>
    </citation>
    <scope>FUNCTION</scope>
    <scope>INTERACTION WITH KATNB1</scope>
</reference>
<reference key="3">
    <citation type="journal article" date="1996" name="J. Cell Sci.">
        <title>Katanin, the microtubule-severing ATPase, is concentrated at centrosomes.</title>
        <authorList>
            <person name="McNally F.J."/>
            <person name="Okawa K."/>
            <person name="Iwamatsu A."/>
            <person name="Vale R.D."/>
        </authorList>
    </citation>
    <scope>SUBCELLULAR LOCATION</scope>
</reference>
<reference key="4">
    <citation type="journal article" date="1999" name="Science">
        <title>Microtubule disassembly by ATP-dependent oligomerization of the AAA enzyme katanin.</title>
        <authorList>
            <person name="Hartman J.J."/>
            <person name="Vale R.D."/>
        </authorList>
    </citation>
    <scope>FUNCTION</scope>
    <scope>MUTAGENESIS OF GLU-334</scope>
</reference>
<keyword id="KW-0067">ATP-binding</keyword>
<keyword id="KW-0131">Cell cycle</keyword>
<keyword id="KW-0132">Cell division</keyword>
<keyword id="KW-0963">Cytoplasm</keyword>
<keyword id="KW-0206">Cytoskeleton</keyword>
<keyword id="KW-0903">Direct protein sequencing</keyword>
<keyword id="KW-0413">Isomerase</keyword>
<keyword id="KW-0493">Microtubule</keyword>
<keyword id="KW-0498">Mitosis</keyword>
<keyword id="KW-0547">Nucleotide-binding</keyword>
<keyword id="KW-1185">Reference proteome</keyword>
<organism>
    <name type="scientific">Strongylocentrotus purpuratus</name>
    <name type="common">Purple sea urchin</name>
    <dbReference type="NCBI Taxonomy" id="7668"/>
    <lineage>
        <taxon>Eukaryota</taxon>
        <taxon>Metazoa</taxon>
        <taxon>Echinodermata</taxon>
        <taxon>Eleutherozoa</taxon>
        <taxon>Echinozoa</taxon>
        <taxon>Echinoidea</taxon>
        <taxon>Euechinoidea</taxon>
        <taxon>Echinacea</taxon>
        <taxon>Camarodonta</taxon>
        <taxon>Echinidea</taxon>
        <taxon>Strongylocentrotidae</taxon>
        <taxon>Strongylocentrotus</taxon>
    </lineage>
</organism>
<feature type="chain" id="PRO_0000084598" description="Katanin p60 ATPase-containing subunit A1">
    <location>
        <begin position="1"/>
        <end position="516"/>
    </location>
</feature>
<feature type="region of interest" description="Disordered" evidence="2">
    <location>
        <begin position="75"/>
        <end position="212"/>
    </location>
</feature>
<feature type="compositionally biased region" description="Basic and acidic residues" evidence="2">
    <location>
        <begin position="133"/>
        <end position="143"/>
    </location>
</feature>
<feature type="compositionally biased region" description="Basic and acidic residues" evidence="2">
    <location>
        <begin position="155"/>
        <end position="167"/>
    </location>
</feature>
<feature type="compositionally biased region" description="Gly residues" evidence="2">
    <location>
        <begin position="168"/>
        <end position="178"/>
    </location>
</feature>
<feature type="compositionally biased region" description="Basic and acidic residues" evidence="2">
    <location>
        <begin position="179"/>
        <end position="212"/>
    </location>
</feature>
<feature type="binding site" evidence="1">
    <location>
        <begin position="274"/>
        <end position="281"/>
    </location>
    <ligand>
        <name>ATP</name>
        <dbReference type="ChEBI" id="CHEBI:30616"/>
    </ligand>
</feature>
<feature type="mutagenesis site" description="Abolishes ATPase and microtubule severing activity; promotes formation of stable oligomers." evidence="3">
    <original>E</original>
    <variation>Q</variation>
    <location>
        <position position="334"/>
    </location>
</feature>
<evidence type="ECO:0000255" key="1">
    <source>
        <dbReference type="HAMAP-Rule" id="MF_03023"/>
    </source>
</evidence>
<evidence type="ECO:0000256" key="2">
    <source>
        <dbReference type="SAM" id="MobiDB-lite"/>
    </source>
</evidence>
<evidence type="ECO:0000269" key="3">
    <source>
    </source>
</evidence>
<evidence type="ECO:0000269" key="4">
    <source>
    </source>
</evidence>
<evidence type="ECO:0000269" key="5">
    <source>
    </source>
</evidence>
<dbReference type="EC" id="5.6.1.1" evidence="1"/>
<dbReference type="EMBL" id="AF052191">
    <property type="protein sequence ID" value="AAC15706.1"/>
    <property type="molecule type" value="mRNA"/>
</dbReference>
<dbReference type="RefSeq" id="NP_999733.1">
    <property type="nucleotide sequence ID" value="NM_214568.1"/>
</dbReference>
<dbReference type="RefSeq" id="XP_011684098.1">
    <property type="nucleotide sequence ID" value="XM_011685796.2"/>
</dbReference>
<dbReference type="RefSeq" id="XP_011684100.1">
    <property type="nucleotide sequence ID" value="XM_011685798.2"/>
</dbReference>
<dbReference type="SMR" id="O61577"/>
<dbReference type="FunCoup" id="O61577">
    <property type="interactions" value="1174"/>
</dbReference>
<dbReference type="STRING" id="7668.O61577"/>
<dbReference type="EnsemblMetazoa" id="NM_214568">
    <property type="protein sequence ID" value="NP_999733"/>
    <property type="gene ID" value="GeneID_373368"/>
</dbReference>
<dbReference type="EnsemblMetazoa" id="XM_011685796">
    <property type="protein sequence ID" value="XP_011684098"/>
    <property type="gene ID" value="GeneID_373368"/>
</dbReference>
<dbReference type="EnsemblMetazoa" id="XM_011685798">
    <property type="protein sequence ID" value="XP_011684100"/>
    <property type="gene ID" value="GeneID_373368"/>
</dbReference>
<dbReference type="GeneID" id="373368"/>
<dbReference type="KEGG" id="spu:373368"/>
<dbReference type="CTD" id="84056"/>
<dbReference type="InParanoid" id="O61577"/>
<dbReference type="OrthoDB" id="5334845at2759"/>
<dbReference type="PhylomeDB" id="O61577"/>
<dbReference type="Proteomes" id="UP000007110">
    <property type="component" value="Unassembled WGS sequence"/>
</dbReference>
<dbReference type="GO" id="GO:0005813">
    <property type="term" value="C:centrosome"/>
    <property type="evidence" value="ECO:0007669"/>
    <property type="project" value="UniProtKB-SubCell"/>
</dbReference>
<dbReference type="GO" id="GO:0005737">
    <property type="term" value="C:cytoplasm"/>
    <property type="evidence" value="ECO:0000250"/>
    <property type="project" value="UniProtKB"/>
</dbReference>
<dbReference type="GO" id="GO:0005874">
    <property type="term" value="C:microtubule"/>
    <property type="evidence" value="ECO:0007669"/>
    <property type="project" value="UniProtKB-KW"/>
</dbReference>
<dbReference type="GO" id="GO:0015630">
    <property type="term" value="C:microtubule cytoskeleton"/>
    <property type="evidence" value="ECO:0000318"/>
    <property type="project" value="GO_Central"/>
</dbReference>
<dbReference type="GO" id="GO:0030496">
    <property type="term" value="C:midbody"/>
    <property type="evidence" value="ECO:0000250"/>
    <property type="project" value="UniProtKB"/>
</dbReference>
<dbReference type="GO" id="GO:0097431">
    <property type="term" value="C:mitotic spindle pole"/>
    <property type="evidence" value="ECO:0000250"/>
    <property type="project" value="UniProtKB"/>
</dbReference>
<dbReference type="GO" id="GO:0005819">
    <property type="term" value="C:spindle"/>
    <property type="evidence" value="ECO:0000250"/>
    <property type="project" value="UniProtKB"/>
</dbReference>
<dbReference type="GO" id="GO:0000922">
    <property type="term" value="C:spindle pole"/>
    <property type="evidence" value="ECO:0000250"/>
    <property type="project" value="UniProtKB"/>
</dbReference>
<dbReference type="GO" id="GO:0005524">
    <property type="term" value="F:ATP binding"/>
    <property type="evidence" value="ECO:0007669"/>
    <property type="project" value="UniProtKB-KW"/>
</dbReference>
<dbReference type="GO" id="GO:0016887">
    <property type="term" value="F:ATP hydrolysis activity"/>
    <property type="evidence" value="ECO:0000318"/>
    <property type="project" value="GO_Central"/>
</dbReference>
<dbReference type="GO" id="GO:0008017">
    <property type="term" value="F:microtubule binding"/>
    <property type="evidence" value="ECO:0007669"/>
    <property type="project" value="UniProtKB-UniRule"/>
</dbReference>
<dbReference type="GO" id="GO:0008568">
    <property type="term" value="F:microtubule severing ATPase activity"/>
    <property type="evidence" value="ECO:0007669"/>
    <property type="project" value="UniProtKB-EC"/>
</dbReference>
<dbReference type="GO" id="GO:0051301">
    <property type="term" value="P:cell division"/>
    <property type="evidence" value="ECO:0007669"/>
    <property type="project" value="UniProtKB-KW"/>
</dbReference>
<dbReference type="GO" id="GO:0051013">
    <property type="term" value="P:microtubule severing"/>
    <property type="evidence" value="ECO:0000318"/>
    <property type="project" value="GO_Central"/>
</dbReference>
<dbReference type="CDD" id="cd21748">
    <property type="entry name" value="Kp60-NTD"/>
    <property type="match status" value="1"/>
</dbReference>
<dbReference type="CDD" id="cd19522">
    <property type="entry name" value="RecA-like_KTNA1"/>
    <property type="match status" value="1"/>
</dbReference>
<dbReference type="FunFam" id="1.10.8.60:FF:000025">
    <property type="entry name" value="Katanin p60 ATPase-containing subunit A1"/>
    <property type="match status" value="1"/>
</dbReference>
<dbReference type="FunFam" id="1.20.58.80:FF:000003">
    <property type="entry name" value="Katanin p60 ATPase-containing subunit A1"/>
    <property type="match status" value="1"/>
</dbReference>
<dbReference type="FunFam" id="3.40.50.300:FF:000159">
    <property type="entry name" value="Katanin p60 ATPase-containing subunit A1"/>
    <property type="match status" value="1"/>
</dbReference>
<dbReference type="Gene3D" id="1.10.8.60">
    <property type="match status" value="1"/>
</dbReference>
<dbReference type="Gene3D" id="3.40.50.300">
    <property type="entry name" value="P-loop containing nucleotide triphosphate hydrolases"/>
    <property type="match status" value="1"/>
</dbReference>
<dbReference type="Gene3D" id="1.20.58.80">
    <property type="entry name" value="Phosphotransferase system, lactose/cellobiose-type IIA subunit"/>
    <property type="match status" value="1"/>
</dbReference>
<dbReference type="HAMAP" id="MF_03023">
    <property type="entry name" value="Katanin_p60_A1"/>
    <property type="match status" value="1"/>
</dbReference>
<dbReference type="InterPro" id="IPR003593">
    <property type="entry name" value="AAA+_ATPase"/>
</dbReference>
<dbReference type="InterPro" id="IPR041569">
    <property type="entry name" value="AAA_lid_3"/>
</dbReference>
<dbReference type="InterPro" id="IPR003959">
    <property type="entry name" value="ATPase_AAA_core"/>
</dbReference>
<dbReference type="InterPro" id="IPR003960">
    <property type="entry name" value="ATPase_AAA_CS"/>
</dbReference>
<dbReference type="InterPro" id="IPR028596">
    <property type="entry name" value="KATNA1"/>
</dbReference>
<dbReference type="InterPro" id="IPR048611">
    <property type="entry name" value="KATNA1_MIT"/>
</dbReference>
<dbReference type="InterPro" id="IPR048612">
    <property type="entry name" value="KTNA1_AAA_dom"/>
</dbReference>
<dbReference type="InterPro" id="IPR050304">
    <property type="entry name" value="MT-severing_AAA_ATPase"/>
</dbReference>
<dbReference type="InterPro" id="IPR027417">
    <property type="entry name" value="P-loop_NTPase"/>
</dbReference>
<dbReference type="InterPro" id="IPR015415">
    <property type="entry name" value="Spast_Vps4_C"/>
</dbReference>
<dbReference type="PANTHER" id="PTHR23074">
    <property type="entry name" value="AAA DOMAIN-CONTAINING"/>
    <property type="match status" value="1"/>
</dbReference>
<dbReference type="PANTHER" id="PTHR23074:SF19">
    <property type="entry name" value="KATANIN P60 ATPASE-CONTAINING SUBUNIT A1"/>
    <property type="match status" value="1"/>
</dbReference>
<dbReference type="Pfam" id="PF00004">
    <property type="entry name" value="AAA"/>
    <property type="match status" value="1"/>
</dbReference>
<dbReference type="Pfam" id="PF17862">
    <property type="entry name" value="AAA_lid_3"/>
    <property type="match status" value="1"/>
</dbReference>
<dbReference type="Pfam" id="PF21126">
    <property type="entry name" value="KATNA1_MIT"/>
    <property type="match status" value="1"/>
</dbReference>
<dbReference type="Pfam" id="PF09336">
    <property type="entry name" value="Vps4_C"/>
    <property type="match status" value="1"/>
</dbReference>
<dbReference type="SMART" id="SM00382">
    <property type="entry name" value="AAA"/>
    <property type="match status" value="1"/>
</dbReference>
<dbReference type="SUPFAM" id="SSF52540">
    <property type="entry name" value="P-loop containing nucleoside triphosphate hydrolases"/>
    <property type="match status" value="1"/>
</dbReference>
<dbReference type="PROSITE" id="PS00674">
    <property type="entry name" value="AAA"/>
    <property type="match status" value="1"/>
</dbReference>
<proteinExistence type="evidence at protein level"/>
<protein>
    <recommendedName>
        <fullName evidence="1">Katanin p60 ATPase-containing subunit A1</fullName>
        <shortName evidence="1">Katanin p60 subunit A1</shortName>
        <ecNumber evidence="1">5.6.1.1</ecNumber>
    </recommendedName>
    <alternativeName>
        <fullName evidence="1">p60 katanin</fullName>
    </alternativeName>
</protein>
<name>KTNA1_STRPU</name>